<gene>
    <name evidence="7" type="primary">tropG</name>
    <name evidence="6" type="synonym">tsR10</name>
    <name type="ORF">TSTA_117860</name>
</gene>
<organism>
    <name type="scientific">Talaromyces stipitatus (strain ATCC 10500 / CBS 375.48 / QM 6759 / NRRL 1006)</name>
    <name type="common">Penicillium stipitatum</name>
    <dbReference type="NCBI Taxonomy" id="441959"/>
    <lineage>
        <taxon>Eukaryota</taxon>
        <taxon>Fungi</taxon>
        <taxon>Dikarya</taxon>
        <taxon>Ascomycota</taxon>
        <taxon>Pezizomycotina</taxon>
        <taxon>Eurotiomycetes</taxon>
        <taxon>Eurotiomycetidae</taxon>
        <taxon>Eurotiales</taxon>
        <taxon>Trichocomaceae</taxon>
        <taxon>Talaromyces</taxon>
        <taxon>Talaromyces sect. Talaromyces</taxon>
    </lineage>
</organism>
<dbReference type="EC" id="1.1.1.-" evidence="5"/>
<dbReference type="EMBL" id="BK008910">
    <property type="protein sequence ID" value="DAA64709.1"/>
    <property type="molecule type" value="Genomic_DNA"/>
</dbReference>
<dbReference type="EMBL" id="EQ962655">
    <property type="protein sequence ID" value="EED18014.1"/>
    <property type="molecule type" value="Genomic_DNA"/>
</dbReference>
<dbReference type="RefSeq" id="XP_002482006.1">
    <property type="nucleotide sequence ID" value="XM_002481961.1"/>
</dbReference>
<dbReference type="SMR" id="B8M9L2"/>
<dbReference type="STRING" id="441959.B8M9L2"/>
<dbReference type="GeneID" id="8105844"/>
<dbReference type="VEuPathDB" id="FungiDB:TSTA_117860"/>
<dbReference type="eggNOG" id="KOG1208">
    <property type="taxonomic scope" value="Eukaryota"/>
</dbReference>
<dbReference type="HOGENOM" id="CLU_010194_44_4_1"/>
<dbReference type="InParanoid" id="B8M9L2"/>
<dbReference type="OMA" id="MMCPGMV"/>
<dbReference type="OrthoDB" id="542013at2759"/>
<dbReference type="PhylomeDB" id="B8M9L2"/>
<dbReference type="Proteomes" id="UP000001745">
    <property type="component" value="Unassembled WGS sequence"/>
</dbReference>
<dbReference type="GO" id="GO:0016491">
    <property type="term" value="F:oxidoreductase activity"/>
    <property type="evidence" value="ECO:0007669"/>
    <property type="project" value="UniProtKB-KW"/>
</dbReference>
<dbReference type="Gene3D" id="3.40.50.720">
    <property type="entry name" value="NAD(P)-binding Rossmann-like Domain"/>
    <property type="match status" value="1"/>
</dbReference>
<dbReference type="InterPro" id="IPR036291">
    <property type="entry name" value="NAD(P)-bd_dom_sf"/>
</dbReference>
<dbReference type="InterPro" id="IPR002347">
    <property type="entry name" value="SDR_fam"/>
</dbReference>
<dbReference type="PANTHER" id="PTHR24320:SF252">
    <property type="entry name" value="DEHYDROGENASE_REDUCTASE FAMILY PROTEIN, PUTATIVE (AFU_ORTHOLOGUE AFUA_3G08550)-RELATED"/>
    <property type="match status" value="1"/>
</dbReference>
<dbReference type="PANTHER" id="PTHR24320">
    <property type="entry name" value="RETINOL DEHYDROGENASE"/>
    <property type="match status" value="1"/>
</dbReference>
<dbReference type="Pfam" id="PF00106">
    <property type="entry name" value="adh_short"/>
    <property type="match status" value="1"/>
</dbReference>
<dbReference type="PRINTS" id="PR00081">
    <property type="entry name" value="GDHRDH"/>
</dbReference>
<dbReference type="SUPFAM" id="SSF51735">
    <property type="entry name" value="NAD(P)-binding Rossmann-fold domains"/>
    <property type="match status" value="1"/>
</dbReference>
<comment type="function">
    <text evidence="4 5">Short-chain dehydrogenase/reductase; part of the gene cluster that mediates the biosynthesis of the tropolone class of fungal maleic anhydrides (PubMed:22508998, PubMed:24863423). The pathway begins with the synthesis of 3-methylorcinaldehyde by the non-reducing polyketide synthase (PKS) tropA (PubMed:22508998). 3-methylorcinaldehyde is the substrate for the FAD-dependent monooxygenase tropB to yield a dearomatized hydroxycyclohexadione (PubMed:22508998, PubMed:24863423). The 2-oxoglutarate-dependent dioxygenase tropC then performs the oxidative ring expansion to provide the first tropolone metabolite stipitaldehyde (PubMed:22508998, PubMed:24863423). Trop D converts stipitaldehyde into stipitacetal which is in turn converted to stipitalide by the short-chain dehydrogenase/reductase tropE (PubMed:24863423). The next steps involve tropF, tropG, tropH, tropI and tropJ to form successive tropolone maleic anhydrides including stipitaldehydic, stipitatonic and stipitatic acids (PubMed:24863423).</text>
</comment>
<comment type="pathway">
    <text evidence="5">Secondary metabolite biosynthesis.</text>
</comment>
<comment type="similarity">
    <text evidence="8">Belongs to the short-chain dehydrogenases/reductases (SDR) family.</text>
</comment>
<keyword id="KW-0521">NADP</keyword>
<keyword id="KW-0560">Oxidoreductase</keyword>
<keyword id="KW-1185">Reference proteome</keyword>
<proteinExistence type="inferred from homology"/>
<reference key="1">
    <citation type="journal article" date="2012" name="Proc. Natl. Acad. Sci. U.S.A.">
        <title>Genetic, molecular, and biochemical basis of fungal tropolone biosynthesis.</title>
        <authorList>
            <person name="Davison J."/>
            <person name="al Fahad A."/>
            <person name="Cai M."/>
            <person name="Song Z."/>
            <person name="Yehia S.Y."/>
            <person name="Lazarus C.M."/>
            <person name="Bailey A.M."/>
            <person name="Simpson T.J."/>
            <person name="Cox R.J."/>
        </authorList>
    </citation>
    <scope>NUCLEOTIDE SEQUENCE [GENOMIC DNA]</scope>
    <scope>FUNCTION</scope>
    <source>
        <strain>ATCC 10500 / CBS 375.48 / QM 6759 / NRRL 1006</strain>
    </source>
</reference>
<reference key="2">
    <citation type="journal article" date="2014" name="Angew. Chem. Int. Ed.">
        <title>The biosynthesis and catabolism of the maleic anhydride moiety of stipitatonic acid.</title>
        <authorList>
            <person name="al Fahad A."/>
            <person name="Abood A."/>
            <person name="Simpson T.J."/>
            <person name="Cox R.J."/>
        </authorList>
    </citation>
    <scope>NUCLEOTIDE SEQUENCE [GENOMIC DNA]</scope>
    <scope>FUNCTION</scope>
    <source>
        <strain>ATCC 10500 / CBS 375.48 / QM 6759 / NRRL 1006</strain>
    </source>
</reference>
<reference key="3">
    <citation type="journal article" date="2015" name="Genome Announc.">
        <title>Genome sequence of the AIDS-associated pathogen Penicillium marneffei (ATCC18224) and its near taxonomic relative Talaromyces stipitatus (ATCC10500).</title>
        <authorList>
            <person name="Nierman W.C."/>
            <person name="Fedorova-Abrams N.D."/>
            <person name="Andrianopoulos A."/>
        </authorList>
    </citation>
    <scope>NUCLEOTIDE SEQUENCE [LARGE SCALE GENOMIC DNA]</scope>
    <source>
        <strain>ATCC 10500 / CBS 375.48 / QM 6759 / NRRL 1006</strain>
    </source>
</reference>
<feature type="chain" id="PRO_0000437132" description="Short-chain dehydrogenase/reductase tropG">
    <location>
        <begin position="1"/>
        <end position="329"/>
    </location>
</feature>
<feature type="active site" description="Proton acceptor" evidence="3">
    <location>
        <position position="203"/>
    </location>
</feature>
<feature type="active site" description="Lowers pKa of active site Tyr" evidence="2">
    <location>
        <position position="207"/>
    </location>
</feature>
<feature type="binding site" evidence="1">
    <location>
        <position position="57"/>
    </location>
    <ligand>
        <name>NADP(+)</name>
        <dbReference type="ChEBI" id="CHEBI:58349"/>
    </ligand>
</feature>
<feature type="binding site" evidence="1">
    <location>
        <position position="86"/>
    </location>
    <ligand>
        <name>NADP(+)</name>
        <dbReference type="ChEBI" id="CHEBI:58349"/>
    </ligand>
</feature>
<feature type="binding site" evidence="2">
    <location>
        <position position="113"/>
    </location>
    <ligand>
        <name>NADP(+)</name>
        <dbReference type="ChEBI" id="CHEBI:58349"/>
    </ligand>
</feature>
<feature type="binding site" evidence="2">
    <location>
        <position position="203"/>
    </location>
    <ligand>
        <name>NADP(+)</name>
        <dbReference type="ChEBI" id="CHEBI:58349"/>
    </ligand>
</feature>
<feature type="binding site" evidence="2">
    <location>
        <position position="207"/>
    </location>
    <ligand>
        <name>NADP(+)</name>
        <dbReference type="ChEBI" id="CHEBI:58349"/>
    </ligand>
</feature>
<name>TROPG_TALSN</name>
<protein>
    <recommendedName>
        <fullName evidence="6">Short-chain dehydrogenase/reductase tropG</fullName>
        <ecNumber evidence="5">1.1.1.-</ecNumber>
    </recommendedName>
    <alternativeName>
        <fullName evidence="7">Tropolone synthesis protein G</fullName>
    </alternativeName>
</protein>
<sequence length="329" mass="36701">MVKFFQPKISPLPDGIDLKGSTAVVTGASAGMGLELTRQLLQLNISTVILAVRNVAKGENVVKQLRGDPHIRTYNGNATLKVMELDMDKYDSVQRFAKHLRDEIPIVNFLILNAGIGLLKHDRSPSGHDRTLQVNYYSNALLIAELLPYLKASAERTTIPTRITWVGSRAFETTSLQKTPLQPNERVLEHMDKKEFFAPFQRYGDSKLLCLLFMCSLARQIDPKKVIINMLCPGMVNTNMSDVLPVYLRAVINVVKAIRARPVEVGVWIILNAALVAGPDSHGKFLIDKDIASESQYISSPAGQEVQKKIWEETIEELSRLTTLPPEVN</sequence>
<accession>B8M9L2</accession>
<evidence type="ECO:0000250" key="1">
    <source>
        <dbReference type="UniProtKB" id="L0E2Z4"/>
    </source>
</evidence>
<evidence type="ECO:0000250" key="2">
    <source>
        <dbReference type="UniProtKB" id="O93868"/>
    </source>
</evidence>
<evidence type="ECO:0000255" key="3">
    <source>
        <dbReference type="PROSITE-ProRule" id="PRU10001"/>
    </source>
</evidence>
<evidence type="ECO:0000269" key="4">
    <source>
    </source>
</evidence>
<evidence type="ECO:0000269" key="5">
    <source>
    </source>
</evidence>
<evidence type="ECO:0000303" key="6">
    <source>
    </source>
</evidence>
<evidence type="ECO:0000303" key="7">
    <source>
    </source>
</evidence>
<evidence type="ECO:0000305" key="8"/>